<protein>
    <recommendedName>
        <fullName>Response regulator PleD</fullName>
    </recommendedName>
    <alternativeName>
        <fullName>Stalked cell differentiation-controlling protein</fullName>
    </alternativeName>
    <domain>
        <recommendedName>
            <fullName>Diguanylate cyclase</fullName>
            <shortName>DGC</shortName>
            <ecNumber evidence="5">2.7.7.65</ecNumber>
        </recommendedName>
        <alternativeName>
            <fullName>Diguanylate kinase</fullName>
        </alternativeName>
    </domain>
</protein>
<name>PLED_CAUVN</name>
<sequence>MSARILVVDDIEANVRLLEAKLTAEYYEVSTAMDGPTALAMAARDLPDIILLDVMMPGMDGFTVCRKLKDDPTTRHIPVVLITALDGRGDRIQGLESGASDFLTKPIDDVMLFARVRSLTRFKLVIDELRQREASGRRMGVIAGAAARLDGLGGRVLIVDDNERQAQRVAAELGVEHRPVIESDPEKAKISAGGPVDLVIVNAAAKNFDGLRFTAALRSEERTRQLPVLAMVDPDDRGRMVKALEIGVNDILSRPIDPQELSARVKTQIQRKRYTDYLRNNLDHSLELAVTDQLTGLHNRRYMTGQLDSLVKRATLGGDPVSALLIDIDFFKKINDTFGHDIGDEVLREFALRLASNVRAIDLPCRYGGEEFVVIMPDTALADALRIAERIRMHVSGSPFTVAHGREMLNVTISIGVSATAGEGDTPEALLKRADEGVYQAKASGRNAVVGKAA</sequence>
<organism>
    <name type="scientific">Caulobacter vibrioides (strain NA1000 / CB15N)</name>
    <name type="common">Caulobacter crescentus</name>
    <dbReference type="NCBI Taxonomy" id="565050"/>
    <lineage>
        <taxon>Bacteria</taxon>
        <taxon>Pseudomonadati</taxon>
        <taxon>Pseudomonadota</taxon>
        <taxon>Alphaproteobacteria</taxon>
        <taxon>Caulobacterales</taxon>
        <taxon>Caulobacteraceae</taxon>
        <taxon>Caulobacter</taxon>
    </lineage>
</organism>
<accession>B8GZM2</accession>
<gene>
    <name type="primary">pleD</name>
    <name type="ordered locus">CCNA_02546</name>
</gene>
<dbReference type="EC" id="2.7.7.65" evidence="5"/>
<dbReference type="EMBL" id="CP001340">
    <property type="protein sequence ID" value="ACL96011.1"/>
    <property type="molecule type" value="Genomic_DNA"/>
</dbReference>
<dbReference type="RefSeq" id="WP_010920320.1">
    <property type="nucleotide sequence ID" value="NC_011916.1"/>
</dbReference>
<dbReference type="RefSeq" id="YP_002517919.1">
    <property type="nucleotide sequence ID" value="NC_011916.1"/>
</dbReference>
<dbReference type="PDB" id="1W25">
    <property type="method" value="X-ray"/>
    <property type="resolution" value="2.70 A"/>
    <property type="chains" value="A/B=2-454"/>
</dbReference>
<dbReference type="PDB" id="2V0N">
    <property type="method" value="X-ray"/>
    <property type="resolution" value="2.71 A"/>
    <property type="chains" value="A/B=2-454"/>
</dbReference>
<dbReference type="PDB" id="2WB4">
    <property type="method" value="X-ray"/>
    <property type="resolution" value="2.80 A"/>
    <property type="chains" value="A/B=1-454"/>
</dbReference>
<dbReference type="PDBsum" id="1W25"/>
<dbReference type="PDBsum" id="2V0N"/>
<dbReference type="PDBsum" id="2WB4"/>
<dbReference type="SMR" id="B8GZM2"/>
<dbReference type="GeneID" id="7333643"/>
<dbReference type="KEGG" id="ccs:CCNA_02546"/>
<dbReference type="PATRIC" id="fig|565050.3.peg.2497"/>
<dbReference type="HOGENOM" id="CLU_000445_11_28_5"/>
<dbReference type="OrthoDB" id="9812260at2"/>
<dbReference type="PhylomeDB" id="B8GZM2"/>
<dbReference type="BRENDA" id="2.7.7.65">
    <property type="organism ID" value="1218"/>
</dbReference>
<dbReference type="UniPathway" id="UPA00599"/>
<dbReference type="EvolutionaryTrace" id="B8GZM2"/>
<dbReference type="Proteomes" id="UP000001364">
    <property type="component" value="Chromosome"/>
</dbReference>
<dbReference type="GO" id="GO:0005737">
    <property type="term" value="C:cytoplasm"/>
    <property type="evidence" value="ECO:0007669"/>
    <property type="project" value="UniProtKB-SubCell"/>
</dbReference>
<dbReference type="GO" id="GO:0005886">
    <property type="term" value="C:plasma membrane"/>
    <property type="evidence" value="ECO:0007669"/>
    <property type="project" value="TreeGrafter"/>
</dbReference>
<dbReference type="GO" id="GO:0052621">
    <property type="term" value="F:diguanylate cyclase activity"/>
    <property type="evidence" value="ECO:0007669"/>
    <property type="project" value="UniProtKB-EC"/>
</dbReference>
<dbReference type="GO" id="GO:0005525">
    <property type="term" value="F:GTP binding"/>
    <property type="evidence" value="ECO:0007669"/>
    <property type="project" value="UniProtKB-KW"/>
</dbReference>
<dbReference type="GO" id="GO:0046872">
    <property type="term" value="F:metal ion binding"/>
    <property type="evidence" value="ECO:0007669"/>
    <property type="project" value="UniProtKB-KW"/>
</dbReference>
<dbReference type="GO" id="GO:0043709">
    <property type="term" value="P:cell adhesion involved in single-species biofilm formation"/>
    <property type="evidence" value="ECO:0007669"/>
    <property type="project" value="TreeGrafter"/>
</dbReference>
<dbReference type="GO" id="GO:0030154">
    <property type="term" value="P:cell differentiation"/>
    <property type="evidence" value="ECO:0007669"/>
    <property type="project" value="UniProtKB-KW"/>
</dbReference>
<dbReference type="GO" id="GO:1902201">
    <property type="term" value="P:negative regulation of bacterial-type flagellum-dependent cell motility"/>
    <property type="evidence" value="ECO:0007669"/>
    <property type="project" value="TreeGrafter"/>
</dbReference>
<dbReference type="GO" id="GO:0000160">
    <property type="term" value="P:phosphorelay signal transduction system"/>
    <property type="evidence" value="ECO:0007669"/>
    <property type="project" value="UniProtKB-KW"/>
</dbReference>
<dbReference type="CDD" id="cd01949">
    <property type="entry name" value="GGDEF"/>
    <property type="match status" value="1"/>
</dbReference>
<dbReference type="CDD" id="cd17538">
    <property type="entry name" value="REC_D1_PleD-like"/>
    <property type="match status" value="1"/>
</dbReference>
<dbReference type="FunFam" id="3.30.70.270:FF:000167">
    <property type="entry name" value="Response regulator PleD"/>
    <property type="match status" value="1"/>
</dbReference>
<dbReference type="FunFam" id="3.40.50.2300:FF:000574">
    <property type="entry name" value="Response regulator PleD"/>
    <property type="match status" value="1"/>
</dbReference>
<dbReference type="Gene3D" id="3.30.70.270">
    <property type="match status" value="1"/>
</dbReference>
<dbReference type="Gene3D" id="3.40.50.2300">
    <property type="match status" value="1"/>
</dbReference>
<dbReference type="InterPro" id="IPR011006">
    <property type="entry name" value="CheY-like_superfamily"/>
</dbReference>
<dbReference type="InterPro" id="IPR050469">
    <property type="entry name" value="Diguanylate_Cyclase"/>
</dbReference>
<dbReference type="InterPro" id="IPR000160">
    <property type="entry name" value="GGDEF_dom"/>
</dbReference>
<dbReference type="InterPro" id="IPR029787">
    <property type="entry name" value="Nucleotide_cyclase"/>
</dbReference>
<dbReference type="InterPro" id="IPR043128">
    <property type="entry name" value="Rev_trsase/Diguanyl_cyclase"/>
</dbReference>
<dbReference type="InterPro" id="IPR001789">
    <property type="entry name" value="Sig_transdc_resp-reg_receiver"/>
</dbReference>
<dbReference type="NCBIfam" id="TIGR00254">
    <property type="entry name" value="GGDEF"/>
    <property type="match status" value="1"/>
</dbReference>
<dbReference type="NCBIfam" id="NF007135">
    <property type="entry name" value="PRK09581.1"/>
    <property type="match status" value="1"/>
</dbReference>
<dbReference type="PANTHER" id="PTHR45138:SF9">
    <property type="entry name" value="DIGUANYLATE CYCLASE DGCM-RELATED"/>
    <property type="match status" value="1"/>
</dbReference>
<dbReference type="PANTHER" id="PTHR45138">
    <property type="entry name" value="REGULATORY COMPONENTS OF SENSORY TRANSDUCTION SYSTEM"/>
    <property type="match status" value="1"/>
</dbReference>
<dbReference type="Pfam" id="PF00990">
    <property type="entry name" value="GGDEF"/>
    <property type="match status" value="1"/>
</dbReference>
<dbReference type="Pfam" id="PF00072">
    <property type="entry name" value="Response_reg"/>
    <property type="match status" value="2"/>
</dbReference>
<dbReference type="SMART" id="SM00267">
    <property type="entry name" value="GGDEF"/>
    <property type="match status" value="1"/>
</dbReference>
<dbReference type="SMART" id="SM00448">
    <property type="entry name" value="REC"/>
    <property type="match status" value="2"/>
</dbReference>
<dbReference type="SUPFAM" id="SSF52172">
    <property type="entry name" value="CheY-like"/>
    <property type="match status" value="2"/>
</dbReference>
<dbReference type="SUPFAM" id="SSF55073">
    <property type="entry name" value="Nucleotide cyclase"/>
    <property type="match status" value="1"/>
</dbReference>
<dbReference type="PROSITE" id="PS50887">
    <property type="entry name" value="GGDEF"/>
    <property type="match status" value="1"/>
</dbReference>
<dbReference type="PROSITE" id="PS50110">
    <property type="entry name" value="RESPONSE_REGULATORY"/>
    <property type="match status" value="2"/>
</dbReference>
<evidence type="ECO:0000255" key="1"/>
<evidence type="ECO:0000255" key="2">
    <source>
        <dbReference type="PROSITE-ProRule" id="PRU00095"/>
    </source>
</evidence>
<evidence type="ECO:0000255" key="3">
    <source>
        <dbReference type="PROSITE-ProRule" id="PRU00169"/>
    </source>
</evidence>
<evidence type="ECO:0000269" key="4">
    <source>
    </source>
</evidence>
<evidence type="ECO:0000269" key="5">
    <source>
    </source>
</evidence>
<evidence type="ECO:0000269" key="6">
    <source>
    </source>
</evidence>
<evidence type="ECO:0000269" key="7">
    <source>
    </source>
</evidence>
<evidence type="ECO:0000269" key="8">
    <source ref="6"/>
</evidence>
<evidence type="ECO:0000305" key="9"/>
<evidence type="ECO:0000305" key="10">
    <source>
    </source>
</evidence>
<evidence type="ECO:0000305" key="11">
    <source ref="6"/>
</evidence>
<evidence type="ECO:0007744" key="12">
    <source>
        <dbReference type="PDB" id="1W25"/>
    </source>
</evidence>
<evidence type="ECO:0007744" key="13">
    <source>
        <dbReference type="PDB" id="2V0N"/>
    </source>
</evidence>
<evidence type="ECO:0007744" key="14">
    <source>
        <dbReference type="PDB" id="2WB4"/>
    </source>
</evidence>
<evidence type="ECO:0007829" key="15">
    <source>
        <dbReference type="PDB" id="1W25"/>
    </source>
</evidence>
<evidence type="ECO:0007829" key="16">
    <source>
        <dbReference type="PDB" id="2V0N"/>
    </source>
</evidence>
<evidence type="ECO:0007829" key="17">
    <source>
        <dbReference type="PDB" id="2WB4"/>
    </source>
</evidence>
<comment type="function">
    <text evidence="4">Response regulator that is part of a signal transduction pathway controlling cell differentiation in the swarmer-to-stalked cell transition.</text>
</comment>
<comment type="function">
    <text evidence="5">Catalyzes the condensation of two GTP molecules to the cyclic dinucleotide di-GMP (c-di-GMP), which acts as a secondary messenger.</text>
</comment>
<comment type="catalytic activity">
    <reaction evidence="5">
        <text>2 GTP = 3',3'-c-di-GMP + 2 diphosphate</text>
        <dbReference type="Rhea" id="RHEA:24898"/>
        <dbReference type="ChEBI" id="CHEBI:33019"/>
        <dbReference type="ChEBI" id="CHEBI:37565"/>
        <dbReference type="ChEBI" id="CHEBI:58805"/>
        <dbReference type="EC" id="2.7.7.65"/>
    </reaction>
</comment>
<comment type="cofactor">
    <cofactor evidence="7">
        <name>Mg(2+)</name>
        <dbReference type="ChEBI" id="CHEBI:18420"/>
    </cofactor>
    <text evidence="7">Binds 2 Mg(2+) per monomer.</text>
</comment>
<comment type="activity regulation">
    <text evidence="6">Allosterically inhibited by dimers of the product c-di-GMP.</text>
</comment>
<comment type="pathway">
    <text>Purine metabolism; 3',5'-cyclic di-GMP biosynthesis.</text>
</comment>
<comment type="subunit">
    <text evidence="6">Homodimer. Inactive monomer in solution, dimerization seems to be required for activity. Dimerization in vitro is enhanced by BeF(3-) and by 1 mM Mn(2+) or 10 mM Mg(2+).</text>
</comment>
<comment type="subcellular location">
    <subcellularLocation>
        <location>Cytoplasm</location>
    </subcellularLocation>
    <text evidence="5">Phosphorylated PleD localizes to the differentiating pole.</text>
</comment>
<comment type="domain">
    <text evidence="9">Activated by phosphorylation at the first response regulatory domain, which induces dimerization mediated by the two response regulatory domains and allows the two substrate-binding sites to approach each other and the condensation reaction to occur (Probable). The diguanylate cyclase activity is harbored by the GGDEF domain.</text>
</comment>
<comment type="PTM">
    <text evidence="4 5">Phosphorylated by PleC and DivJ. Phosphorylation stimulates cyclase activity.</text>
</comment>
<keyword id="KW-0002">3D-structure</keyword>
<keyword id="KW-0131">Cell cycle</keyword>
<keyword id="KW-0963">Cytoplasm</keyword>
<keyword id="KW-0221">Differentiation</keyword>
<keyword id="KW-0342">GTP-binding</keyword>
<keyword id="KW-0460">Magnesium</keyword>
<keyword id="KW-0479">Metal-binding</keyword>
<keyword id="KW-0547">Nucleotide-binding</keyword>
<keyword id="KW-0597">Phosphoprotein</keyword>
<keyword id="KW-1185">Reference proteome</keyword>
<keyword id="KW-0677">Repeat</keyword>
<keyword id="KW-0807">Transducer</keyword>
<keyword id="KW-0808">Transferase</keyword>
<keyword id="KW-0902">Two-component regulatory system</keyword>
<feature type="chain" id="PRO_0000396955" description="Response regulator PleD">
    <location>
        <begin position="1"/>
        <end position="454"/>
    </location>
</feature>
<feature type="domain" description="Response regulatory 1" evidence="3">
    <location>
        <begin position="4"/>
        <end position="120"/>
    </location>
</feature>
<feature type="domain" description="Response regulatory 2" evidence="3">
    <location>
        <begin position="155"/>
        <end position="269"/>
    </location>
</feature>
<feature type="domain" description="GGDEF" evidence="2">
    <location>
        <begin position="319"/>
        <end position="454"/>
    </location>
</feature>
<feature type="active site" description="Proton acceptor" evidence="1">
    <location>
        <position position="370"/>
    </location>
</feature>
<feature type="binding site" evidence="6">
    <location>
        <position position="9"/>
    </location>
    <ligand>
        <name>Mg(2+)</name>
        <dbReference type="ChEBI" id="CHEBI:18420"/>
        <label>1</label>
    </ligand>
</feature>
<feature type="binding site" evidence="6 7 8">
    <location>
        <position position="10"/>
    </location>
    <ligand>
        <name>Mg(2+)</name>
        <dbReference type="ChEBI" id="CHEBI:18420"/>
        <label>1</label>
    </ligand>
</feature>
<feature type="binding site" evidence="6 7 8">
    <location>
        <position position="53"/>
    </location>
    <ligand>
        <name>Mg(2+)</name>
        <dbReference type="ChEBI" id="CHEBI:18420"/>
        <label>1</label>
    </ligand>
</feature>
<feature type="binding site" evidence="6 7 8">
    <location>
        <position position="55"/>
    </location>
    <ligand>
        <name>Mg(2+)</name>
        <dbReference type="ChEBI" id="CHEBI:18420"/>
        <label>1</label>
    </ligand>
</feature>
<feature type="binding site" evidence="7">
    <location>
        <position position="327"/>
    </location>
    <ligand>
        <name>Mg(2+)</name>
        <dbReference type="ChEBI" id="CHEBI:18420"/>
        <label>2</label>
    </ligand>
</feature>
<feature type="binding site" evidence="7">
    <location>
        <position position="328"/>
    </location>
    <ligand>
        <name>Mg(2+)</name>
        <dbReference type="ChEBI" id="CHEBI:18420"/>
        <label>2</label>
    </ligand>
</feature>
<feature type="binding site" evidence="10 11">
    <location>
        <position position="335"/>
    </location>
    <ligand>
        <name>substrate</name>
    </ligand>
</feature>
<feature type="binding site" evidence="10 11">
    <location>
        <position position="344"/>
    </location>
    <ligand>
        <name>substrate</name>
    </ligand>
</feature>
<feature type="binding site" evidence="7">
    <location>
        <position position="370"/>
    </location>
    <ligand>
        <name>Mg(2+)</name>
        <dbReference type="ChEBI" id="CHEBI:18420"/>
        <label>2</label>
    </ligand>
</feature>
<feature type="site" description="Allosteric product binding, non-activate state">
    <location>
        <position position="178"/>
    </location>
</feature>
<feature type="site" description="Allosteric product binding, active state">
    <location>
        <position position="313"/>
    </location>
</feature>
<feature type="site" description="Transition state stabilizer" evidence="1">
    <location>
        <position position="332"/>
    </location>
</feature>
<feature type="site" description="Allosteric product phosphate group binding, activate and inactive state">
    <location>
        <position position="359"/>
    </location>
</feature>
<feature type="site" description="Allosteric product binding, activate and inactive state">
    <location>
        <position position="362"/>
    </location>
</feature>
<feature type="site" description="Allosteric product binding, activate and inactive state">
    <location>
        <position position="390"/>
    </location>
</feature>
<feature type="modified residue" description="4-aspartylphosphate" evidence="3 4 5">
    <location>
        <position position="53"/>
    </location>
</feature>
<feature type="strand" evidence="15">
    <location>
        <begin position="4"/>
        <end position="8"/>
    </location>
</feature>
<feature type="helix" evidence="15">
    <location>
        <begin position="14"/>
        <end position="24"/>
    </location>
</feature>
<feature type="strand" evidence="15">
    <location>
        <begin position="28"/>
        <end position="34"/>
    </location>
</feature>
<feature type="helix" evidence="15">
    <location>
        <begin position="35"/>
        <end position="45"/>
    </location>
</feature>
<feature type="strand" evidence="15">
    <location>
        <begin position="48"/>
        <end position="54"/>
    </location>
</feature>
<feature type="strand" evidence="15">
    <location>
        <begin position="57"/>
        <end position="59"/>
    </location>
</feature>
<feature type="helix" evidence="15">
    <location>
        <begin position="61"/>
        <end position="70"/>
    </location>
</feature>
<feature type="turn" evidence="15">
    <location>
        <begin position="72"/>
        <end position="76"/>
    </location>
</feature>
<feature type="strand" evidence="15">
    <location>
        <begin position="79"/>
        <end position="83"/>
    </location>
</feature>
<feature type="helix" evidence="15">
    <location>
        <begin position="88"/>
        <end position="97"/>
    </location>
</feature>
<feature type="strand" evidence="15">
    <location>
        <begin position="101"/>
        <end position="106"/>
    </location>
</feature>
<feature type="helix" evidence="15">
    <location>
        <begin position="109"/>
        <end position="133"/>
    </location>
</feature>
<feature type="turn" evidence="15">
    <location>
        <begin position="134"/>
        <end position="137"/>
    </location>
</feature>
<feature type="turn" evidence="15">
    <location>
        <begin position="140"/>
        <end position="143"/>
    </location>
</feature>
<feature type="helix" evidence="17">
    <location>
        <begin position="146"/>
        <end position="148"/>
    </location>
</feature>
<feature type="strand" evidence="17">
    <location>
        <begin position="151"/>
        <end position="153"/>
    </location>
</feature>
<feature type="strand" evidence="15">
    <location>
        <begin position="155"/>
        <end position="159"/>
    </location>
</feature>
<feature type="helix" evidence="15">
    <location>
        <begin position="163"/>
        <end position="173"/>
    </location>
</feature>
<feature type="turn" evidence="15">
    <location>
        <begin position="174"/>
        <end position="176"/>
    </location>
</feature>
<feature type="strand" evidence="15">
    <location>
        <begin position="177"/>
        <end position="182"/>
    </location>
</feature>
<feature type="helix" evidence="15">
    <location>
        <begin position="185"/>
        <end position="193"/>
    </location>
</feature>
<feature type="strand" evidence="15">
    <location>
        <begin position="197"/>
        <end position="202"/>
    </location>
</feature>
<feature type="strand" evidence="15">
    <location>
        <begin position="206"/>
        <end position="208"/>
    </location>
</feature>
<feature type="helix" evidence="15">
    <location>
        <begin position="210"/>
        <end position="218"/>
    </location>
</feature>
<feature type="helix" evidence="15">
    <location>
        <begin position="221"/>
        <end position="223"/>
    </location>
</feature>
<feature type="strand" evidence="15">
    <location>
        <begin position="228"/>
        <end position="232"/>
    </location>
</feature>
<feature type="helix" evidence="15">
    <location>
        <begin position="237"/>
        <end position="245"/>
    </location>
</feature>
<feature type="strand" evidence="15">
    <location>
        <begin position="250"/>
        <end position="255"/>
    </location>
</feature>
<feature type="helix" evidence="15">
    <location>
        <begin position="258"/>
        <end position="279"/>
    </location>
</feature>
<feature type="strand" evidence="15">
    <location>
        <begin position="280"/>
        <end position="283"/>
    </location>
</feature>
<feature type="helix" evidence="16">
    <location>
        <begin position="284"/>
        <end position="286"/>
    </location>
</feature>
<feature type="strand" evidence="17">
    <location>
        <begin position="289"/>
        <end position="291"/>
    </location>
</feature>
<feature type="turn" evidence="15">
    <location>
        <begin position="293"/>
        <end position="295"/>
    </location>
</feature>
<feature type="helix" evidence="15">
    <location>
        <begin position="300"/>
        <end position="315"/>
    </location>
</feature>
<feature type="strand" evidence="15">
    <location>
        <begin position="322"/>
        <end position="328"/>
    </location>
</feature>
<feature type="helix" evidence="15">
    <location>
        <begin position="331"/>
        <end position="337"/>
    </location>
</feature>
<feature type="helix" evidence="15">
    <location>
        <begin position="340"/>
        <end position="356"/>
    </location>
</feature>
<feature type="strand" evidence="15">
    <location>
        <begin position="362"/>
        <end position="366"/>
    </location>
</feature>
<feature type="strand" evidence="15">
    <location>
        <begin position="368"/>
        <end position="376"/>
    </location>
</feature>
<feature type="helix" evidence="15">
    <location>
        <begin position="381"/>
        <end position="396"/>
    </location>
</feature>
<feature type="strand" evidence="16">
    <location>
        <begin position="400"/>
        <end position="402"/>
    </location>
</feature>
<feature type="helix" evidence="15">
    <location>
        <begin position="403"/>
        <end position="405"/>
    </location>
</feature>
<feature type="strand" evidence="16">
    <location>
        <begin position="407"/>
        <end position="409"/>
    </location>
</feature>
<feature type="strand" evidence="15">
    <location>
        <begin position="413"/>
        <end position="419"/>
    </location>
</feature>
<feature type="helix" evidence="15">
    <location>
        <begin position="427"/>
        <end position="443"/>
    </location>
</feature>
<feature type="strand" evidence="15">
    <location>
        <begin position="449"/>
        <end position="451"/>
    </location>
</feature>
<proteinExistence type="evidence at protein level"/>
<reference key="1">
    <citation type="journal article" date="2010" name="J. Bacteriol.">
        <title>The genetic basis of laboratory adaptation in Caulobacter crescentus.</title>
        <authorList>
            <person name="Marks M.E."/>
            <person name="Castro-Rojas C.M."/>
            <person name="Teiling C."/>
            <person name="Du L."/>
            <person name="Kapatral V."/>
            <person name="Walunas T.L."/>
            <person name="Crosson S."/>
        </authorList>
    </citation>
    <scope>NUCLEOTIDE SEQUENCE [LARGE SCALE GENOMIC DNA]</scope>
    <source>
        <strain>NA1000 / CB15N</strain>
    </source>
</reference>
<reference key="2">
    <citation type="journal article" date="2003" name="Mol. Microbiol.">
        <title>Role of the GGDEF regulator PleD in polar development of Caulobacter crescentus.</title>
        <authorList>
            <person name="Aldridge P."/>
            <person name="Paul R."/>
            <person name="Goymer P."/>
            <person name="Rainey P."/>
            <person name="Jenal U."/>
        </authorList>
    </citation>
    <scope>ROLE IN POLAR DEVELOPMENT</scope>
    <scope>PHOSPHORYLATION AT ASP-53</scope>
</reference>
<reference key="3">
    <citation type="journal article" date="2004" name="Genes Dev.">
        <title>Cell cycle-dependent dynamic localization of a bacterial response regulator with a novel di-guanylate cyclase output domain.</title>
        <authorList>
            <person name="Paul R."/>
            <person name="Weiser S."/>
            <person name="Amiot N.C."/>
            <person name="Chan C."/>
            <person name="Schirmer T."/>
            <person name="Giese B."/>
            <person name="Jenal U."/>
        </authorList>
    </citation>
    <scope>FUNCTION AS A NUCLEOTIDE CYCLASE</scope>
    <scope>CELL POLE LOCALIZATION</scope>
    <scope>PHOSPHORYLATION AT ASP-53</scope>
</reference>
<reference evidence="12" key="4">
    <citation type="journal article" date="2004" name="Proc. Natl. Acad. Sci. U.S.A.">
        <title>Structural basis of activity and allosteric control of diguanylate cyclase.</title>
        <authorList>
            <person name="Chan C."/>
            <person name="Paul R."/>
            <person name="Samoray D."/>
            <person name="Amiot N.C."/>
            <person name="Giese B."/>
            <person name="Jenal U."/>
            <person name="Schirmer T."/>
        </authorList>
    </citation>
    <scope>X-RAY CRYSTALLOGRAPHY (2.7 ANGSTROMS) OF COMPLEX WITH C-DI-GMP</scope>
    <scope>ALLOSTERIC REGULATION</scope>
    <scope>SUBUNIT</scope>
</reference>
<reference evidence="13" key="5">
    <citation type="journal article" date="2007" name="Structure">
        <title>Structure of BeF(3-)-modified response regulator PleD: implications for diguanylate cyclase activation, catalysis, and feedback inhibition.</title>
        <authorList>
            <person name="Wassmann P."/>
            <person name="Chan C."/>
            <person name="Paul R."/>
            <person name="Beck A."/>
            <person name="Heerklotz H."/>
            <person name="Jenal U."/>
            <person name="Schirmer T."/>
        </authorList>
    </citation>
    <scope>X-RAY CRYSTALLOGRAPHY (2.71 ANGSTROMS) OF 2-454 OF DIMER WITH C-DI-GMP IN THE ACTIVATED FORM</scope>
    <scope>COFACTOR</scope>
</reference>
<reference evidence="14" key="6">
    <citation type="submission" date="2009-02" db="PDB data bank">
        <title>Crystal structure of activated Pled, identification of dimerization and catalysis relevant regulatory mechanisms.</title>
        <authorList>
            <person name="Wassmann P."/>
            <person name="Massa C."/>
            <person name="Zaehringer F."/>
            <person name="Schirmer T."/>
        </authorList>
    </citation>
    <scope>X-RAY CRYSTALLOGRAPHY (2.80 ANGSTROMS)</scope>
</reference>